<comment type="function">
    <text evidence="1">This is one of the proteins that bind and probably mediate the attachment of the 5S RNA into the large ribosomal subunit, where it forms part of the central protuberance.</text>
</comment>
<comment type="subunit">
    <text evidence="1">Part of the 50S ribosomal subunit; part of the 5S rRNA/L5/L18/L25 subcomplex. Contacts the 5S and 23S rRNAs.</text>
</comment>
<comment type="similarity">
    <text evidence="1">Belongs to the universal ribosomal protein uL18 family.</text>
</comment>
<evidence type="ECO:0000255" key="1">
    <source>
        <dbReference type="HAMAP-Rule" id="MF_01337"/>
    </source>
</evidence>
<evidence type="ECO:0000305" key="2"/>
<name>RL18_DEIDV</name>
<proteinExistence type="inferred from homology"/>
<reference key="1">
    <citation type="journal article" date="2009" name="PLoS Genet.">
        <title>Alliance of proteomics and genomics to unravel the specificities of Sahara bacterium Deinococcus deserti.</title>
        <authorList>
            <person name="de Groot A."/>
            <person name="Dulermo R."/>
            <person name="Ortet P."/>
            <person name="Blanchard L."/>
            <person name="Guerin P."/>
            <person name="Fernandez B."/>
            <person name="Vacherie B."/>
            <person name="Dossat C."/>
            <person name="Jolivet E."/>
            <person name="Siguier P."/>
            <person name="Chandler M."/>
            <person name="Barakat M."/>
            <person name="Dedieu A."/>
            <person name="Barbe V."/>
            <person name="Heulin T."/>
            <person name="Sommer S."/>
            <person name="Achouak W."/>
            <person name="Armengaud J."/>
        </authorList>
    </citation>
    <scope>NUCLEOTIDE SEQUENCE [LARGE SCALE GENOMIC DNA]</scope>
    <source>
        <strain>DSM 17065 / CIP 109153 / LMG 22923 / VCD115</strain>
    </source>
</reference>
<gene>
    <name evidence="1" type="primary">rplR</name>
    <name type="ordered locus">Deide_18790</name>
</gene>
<organism>
    <name type="scientific">Deinococcus deserti (strain DSM 17065 / CIP 109153 / LMG 22923 / VCD115)</name>
    <dbReference type="NCBI Taxonomy" id="546414"/>
    <lineage>
        <taxon>Bacteria</taxon>
        <taxon>Thermotogati</taxon>
        <taxon>Deinococcota</taxon>
        <taxon>Deinococci</taxon>
        <taxon>Deinococcales</taxon>
        <taxon>Deinococcaceae</taxon>
        <taxon>Deinococcus</taxon>
    </lineage>
</organism>
<sequence length="112" mass="11955">MAAQTSIRRKLRARRKVRIAAGERPRLSVFRSSKHIYAQIIDDKNGTTLAAASSAVVKAGNKTDTAAAVGKALAEAASAKGVKQVVFDRGQYKYHGRVKALADAAREGGLDF</sequence>
<protein>
    <recommendedName>
        <fullName evidence="1">Large ribosomal subunit protein uL18</fullName>
    </recommendedName>
    <alternativeName>
        <fullName evidence="2">50S ribosomal protein L18</fullName>
    </alternativeName>
</protein>
<keyword id="KW-1185">Reference proteome</keyword>
<keyword id="KW-0687">Ribonucleoprotein</keyword>
<keyword id="KW-0689">Ribosomal protein</keyword>
<keyword id="KW-0694">RNA-binding</keyword>
<keyword id="KW-0699">rRNA-binding</keyword>
<feature type="chain" id="PRO_1000214667" description="Large ribosomal subunit protein uL18">
    <location>
        <begin position="1"/>
        <end position="112"/>
    </location>
</feature>
<accession>C1CXF0</accession>
<dbReference type="EMBL" id="CP001114">
    <property type="protein sequence ID" value="ACO46867.1"/>
    <property type="molecule type" value="Genomic_DNA"/>
</dbReference>
<dbReference type="RefSeq" id="WP_012693989.1">
    <property type="nucleotide sequence ID" value="NC_012526.1"/>
</dbReference>
<dbReference type="SMR" id="C1CXF0"/>
<dbReference type="STRING" id="546414.Deide_18790"/>
<dbReference type="PaxDb" id="546414-Deide_18790"/>
<dbReference type="KEGG" id="ddr:Deide_18790"/>
<dbReference type="eggNOG" id="COG0256">
    <property type="taxonomic scope" value="Bacteria"/>
</dbReference>
<dbReference type="HOGENOM" id="CLU_098841_0_1_0"/>
<dbReference type="OrthoDB" id="9810939at2"/>
<dbReference type="Proteomes" id="UP000002208">
    <property type="component" value="Chromosome"/>
</dbReference>
<dbReference type="GO" id="GO:0022625">
    <property type="term" value="C:cytosolic large ribosomal subunit"/>
    <property type="evidence" value="ECO:0007669"/>
    <property type="project" value="TreeGrafter"/>
</dbReference>
<dbReference type="GO" id="GO:0008097">
    <property type="term" value="F:5S rRNA binding"/>
    <property type="evidence" value="ECO:0007669"/>
    <property type="project" value="TreeGrafter"/>
</dbReference>
<dbReference type="GO" id="GO:0003735">
    <property type="term" value="F:structural constituent of ribosome"/>
    <property type="evidence" value="ECO:0007669"/>
    <property type="project" value="InterPro"/>
</dbReference>
<dbReference type="GO" id="GO:0006412">
    <property type="term" value="P:translation"/>
    <property type="evidence" value="ECO:0007669"/>
    <property type="project" value="UniProtKB-UniRule"/>
</dbReference>
<dbReference type="CDD" id="cd00432">
    <property type="entry name" value="Ribosomal_L18_L5e"/>
    <property type="match status" value="1"/>
</dbReference>
<dbReference type="FunFam" id="3.30.420.100:FF:000001">
    <property type="entry name" value="50S ribosomal protein L18"/>
    <property type="match status" value="1"/>
</dbReference>
<dbReference type="Gene3D" id="3.30.420.100">
    <property type="match status" value="1"/>
</dbReference>
<dbReference type="HAMAP" id="MF_01337_B">
    <property type="entry name" value="Ribosomal_uL18_B"/>
    <property type="match status" value="1"/>
</dbReference>
<dbReference type="InterPro" id="IPR004389">
    <property type="entry name" value="Ribosomal_uL18_bac-type"/>
</dbReference>
<dbReference type="InterPro" id="IPR005484">
    <property type="entry name" value="Ribosomal_uL18_bac/euk"/>
</dbReference>
<dbReference type="NCBIfam" id="TIGR00060">
    <property type="entry name" value="L18_bact"/>
    <property type="match status" value="1"/>
</dbReference>
<dbReference type="PANTHER" id="PTHR12899">
    <property type="entry name" value="39S RIBOSOMAL PROTEIN L18, MITOCHONDRIAL"/>
    <property type="match status" value="1"/>
</dbReference>
<dbReference type="PANTHER" id="PTHR12899:SF3">
    <property type="entry name" value="LARGE RIBOSOMAL SUBUNIT PROTEIN UL18M"/>
    <property type="match status" value="1"/>
</dbReference>
<dbReference type="Pfam" id="PF00861">
    <property type="entry name" value="Ribosomal_L18p"/>
    <property type="match status" value="1"/>
</dbReference>
<dbReference type="SUPFAM" id="SSF53137">
    <property type="entry name" value="Translational machinery components"/>
    <property type="match status" value="1"/>
</dbReference>